<proteinExistence type="inferred from homology"/>
<dbReference type="EMBL" id="CP000362">
    <property type="protein sequence ID" value="ABG31038.1"/>
    <property type="molecule type" value="Genomic_DNA"/>
</dbReference>
<dbReference type="RefSeq" id="WP_011567658.1">
    <property type="nucleotide sequence ID" value="NZ_FOOO01000013.1"/>
</dbReference>
<dbReference type="SMR" id="Q16AF5"/>
<dbReference type="STRING" id="375451.RD1_1398"/>
<dbReference type="GeneID" id="93911663"/>
<dbReference type="KEGG" id="rde:RD1_1398"/>
<dbReference type="eggNOG" id="COG0051">
    <property type="taxonomic scope" value="Bacteria"/>
</dbReference>
<dbReference type="HOGENOM" id="CLU_122625_1_3_5"/>
<dbReference type="OrthoDB" id="9804464at2"/>
<dbReference type="Proteomes" id="UP000007029">
    <property type="component" value="Chromosome"/>
</dbReference>
<dbReference type="GO" id="GO:1990904">
    <property type="term" value="C:ribonucleoprotein complex"/>
    <property type="evidence" value="ECO:0007669"/>
    <property type="project" value="UniProtKB-KW"/>
</dbReference>
<dbReference type="GO" id="GO:0005840">
    <property type="term" value="C:ribosome"/>
    <property type="evidence" value="ECO:0007669"/>
    <property type="project" value="UniProtKB-KW"/>
</dbReference>
<dbReference type="GO" id="GO:0003735">
    <property type="term" value="F:structural constituent of ribosome"/>
    <property type="evidence" value="ECO:0007669"/>
    <property type="project" value="InterPro"/>
</dbReference>
<dbReference type="GO" id="GO:0000049">
    <property type="term" value="F:tRNA binding"/>
    <property type="evidence" value="ECO:0007669"/>
    <property type="project" value="UniProtKB-UniRule"/>
</dbReference>
<dbReference type="GO" id="GO:0006412">
    <property type="term" value="P:translation"/>
    <property type="evidence" value="ECO:0007669"/>
    <property type="project" value="UniProtKB-UniRule"/>
</dbReference>
<dbReference type="FunFam" id="3.30.70.600:FF:000001">
    <property type="entry name" value="30S ribosomal protein S10"/>
    <property type="match status" value="1"/>
</dbReference>
<dbReference type="Gene3D" id="3.30.70.600">
    <property type="entry name" value="Ribosomal protein S10 domain"/>
    <property type="match status" value="1"/>
</dbReference>
<dbReference type="HAMAP" id="MF_00508">
    <property type="entry name" value="Ribosomal_uS10"/>
    <property type="match status" value="1"/>
</dbReference>
<dbReference type="InterPro" id="IPR001848">
    <property type="entry name" value="Ribosomal_uS10"/>
</dbReference>
<dbReference type="InterPro" id="IPR027486">
    <property type="entry name" value="Ribosomal_uS10_dom"/>
</dbReference>
<dbReference type="InterPro" id="IPR036838">
    <property type="entry name" value="Ribosomal_uS10_dom_sf"/>
</dbReference>
<dbReference type="NCBIfam" id="NF001861">
    <property type="entry name" value="PRK00596.1"/>
    <property type="match status" value="1"/>
</dbReference>
<dbReference type="NCBIfam" id="TIGR01049">
    <property type="entry name" value="rpsJ_bact"/>
    <property type="match status" value="1"/>
</dbReference>
<dbReference type="PANTHER" id="PTHR11700">
    <property type="entry name" value="30S RIBOSOMAL PROTEIN S10 FAMILY MEMBER"/>
    <property type="match status" value="1"/>
</dbReference>
<dbReference type="Pfam" id="PF00338">
    <property type="entry name" value="Ribosomal_S10"/>
    <property type="match status" value="1"/>
</dbReference>
<dbReference type="PRINTS" id="PR00971">
    <property type="entry name" value="RIBOSOMALS10"/>
</dbReference>
<dbReference type="SMART" id="SM01403">
    <property type="entry name" value="Ribosomal_S10"/>
    <property type="match status" value="1"/>
</dbReference>
<dbReference type="SUPFAM" id="SSF54999">
    <property type="entry name" value="Ribosomal protein S10"/>
    <property type="match status" value="1"/>
</dbReference>
<keyword id="KW-1185">Reference proteome</keyword>
<keyword id="KW-0687">Ribonucleoprotein</keyword>
<keyword id="KW-0689">Ribosomal protein</keyword>
<feature type="chain" id="PRO_0000258570" description="Small ribosomal subunit protein uS10">
    <location>
        <begin position="1"/>
        <end position="105"/>
    </location>
</feature>
<gene>
    <name evidence="1" type="primary">rpsJ</name>
    <name type="ordered locus">RD1_1398</name>
</gene>
<name>RS10_ROSDO</name>
<reference key="1">
    <citation type="journal article" date="2007" name="J. Bacteriol.">
        <title>The complete genome sequence of Roseobacter denitrificans reveals a mixotrophic rather than photosynthetic metabolism.</title>
        <authorList>
            <person name="Swingley W.D."/>
            <person name="Sadekar S."/>
            <person name="Mastrian S.D."/>
            <person name="Matthies H.J."/>
            <person name="Hao J."/>
            <person name="Ramos H."/>
            <person name="Acharya C.R."/>
            <person name="Conrad A.L."/>
            <person name="Taylor H.L."/>
            <person name="Dejesa L.C."/>
            <person name="Shah M.K."/>
            <person name="O'Huallachain M.E."/>
            <person name="Lince M.T."/>
            <person name="Blankenship R.E."/>
            <person name="Beatty J.T."/>
            <person name="Touchman J.W."/>
        </authorList>
    </citation>
    <scope>NUCLEOTIDE SEQUENCE [LARGE SCALE GENOMIC DNA]</scope>
    <source>
        <strain>ATCC 33942 / OCh 114</strain>
    </source>
</reference>
<accession>Q16AF5</accession>
<protein>
    <recommendedName>
        <fullName evidence="1">Small ribosomal subunit protein uS10</fullName>
    </recommendedName>
    <alternativeName>
        <fullName evidence="2">30S ribosomal protein S10</fullName>
    </alternativeName>
</protein>
<sequence length="105" mass="11864">MAQSQNIRIRLKAFDYRVLDTSTQEIVNTAKRTGASVRGPIPLPNKIEKFTVLRGPHVDKKSRDQFEIRTHKRLLDIVDPTPQTVDALMKLDLAAGVDVEIKLQS</sequence>
<evidence type="ECO:0000255" key="1">
    <source>
        <dbReference type="HAMAP-Rule" id="MF_00508"/>
    </source>
</evidence>
<evidence type="ECO:0000305" key="2"/>
<organism>
    <name type="scientific">Roseobacter denitrificans (strain ATCC 33942 / OCh 114)</name>
    <name type="common">Erythrobacter sp. (strain OCh 114)</name>
    <name type="synonym">Roseobacter denitrificans</name>
    <dbReference type="NCBI Taxonomy" id="375451"/>
    <lineage>
        <taxon>Bacteria</taxon>
        <taxon>Pseudomonadati</taxon>
        <taxon>Pseudomonadota</taxon>
        <taxon>Alphaproteobacteria</taxon>
        <taxon>Rhodobacterales</taxon>
        <taxon>Roseobacteraceae</taxon>
        <taxon>Roseobacter</taxon>
    </lineage>
</organism>
<comment type="function">
    <text evidence="1">Involved in the binding of tRNA to the ribosomes.</text>
</comment>
<comment type="subunit">
    <text evidence="1">Part of the 30S ribosomal subunit.</text>
</comment>
<comment type="similarity">
    <text evidence="1">Belongs to the universal ribosomal protein uS10 family.</text>
</comment>